<feature type="chain" id="PRO_1000085752" description="Glucosamine-6-phosphate deaminase">
    <location>
        <begin position="1"/>
        <end position="266"/>
    </location>
</feature>
<feature type="active site" description="Proton acceptor; for enolization step" evidence="1">
    <location>
        <position position="72"/>
    </location>
</feature>
<feature type="active site" description="For ring-opening step" evidence="1">
    <location>
        <position position="141"/>
    </location>
</feature>
<feature type="active site" description="Proton acceptor; for ring-opening step" evidence="1">
    <location>
        <position position="143"/>
    </location>
</feature>
<feature type="active site" description="For ring-opening step" evidence="1">
    <location>
        <position position="148"/>
    </location>
</feature>
<feature type="site" description="Part of the allosteric site" evidence="1">
    <location>
        <position position="151"/>
    </location>
</feature>
<feature type="site" description="Part of the allosteric site" evidence="1">
    <location>
        <position position="158"/>
    </location>
</feature>
<feature type="site" description="Part of the allosteric site" evidence="1">
    <location>
        <position position="160"/>
    </location>
</feature>
<feature type="site" description="Part of the allosteric site" evidence="1">
    <location>
        <position position="161"/>
    </location>
</feature>
<feature type="site" description="Part of the allosteric site" evidence="1">
    <location>
        <position position="254"/>
    </location>
</feature>
<reference key="1">
    <citation type="submission" date="2007-11" db="EMBL/GenBank/DDBJ databases">
        <authorList>
            <consortium name="The Salmonella enterica serovar Arizonae Genome Sequencing Project"/>
            <person name="McClelland M."/>
            <person name="Sanderson E.K."/>
            <person name="Porwollik S."/>
            <person name="Spieth J."/>
            <person name="Clifton W.S."/>
            <person name="Fulton R."/>
            <person name="Chunyan W."/>
            <person name="Wollam A."/>
            <person name="Shah N."/>
            <person name="Pepin K."/>
            <person name="Bhonagiri V."/>
            <person name="Nash W."/>
            <person name="Johnson M."/>
            <person name="Thiruvilangam P."/>
            <person name="Wilson R."/>
        </authorList>
    </citation>
    <scope>NUCLEOTIDE SEQUENCE [LARGE SCALE GENOMIC DNA]</scope>
    <source>
        <strain>ATCC BAA-731 / CDC346-86 / RSK2980</strain>
    </source>
</reference>
<accession>A9MKA9</accession>
<protein>
    <recommendedName>
        <fullName evidence="1">Glucosamine-6-phosphate deaminase</fullName>
        <ecNumber evidence="1">3.5.99.6</ecNumber>
    </recommendedName>
    <alternativeName>
        <fullName evidence="1">GlcN6P deaminase</fullName>
        <shortName evidence="1">GNPDA</shortName>
    </alternativeName>
    <alternativeName>
        <fullName evidence="1">Glucosamine-6-phosphate isomerase</fullName>
    </alternativeName>
</protein>
<dbReference type="EC" id="3.5.99.6" evidence="1"/>
<dbReference type="EMBL" id="CP000880">
    <property type="protein sequence ID" value="ABX22128.1"/>
    <property type="molecule type" value="Genomic_DNA"/>
</dbReference>
<dbReference type="SMR" id="A9MKA9"/>
<dbReference type="STRING" id="41514.SARI_02257"/>
<dbReference type="KEGG" id="ses:SARI_02257"/>
<dbReference type="HOGENOM" id="CLU_049611_0_1_6"/>
<dbReference type="UniPathway" id="UPA00629">
    <property type="reaction ID" value="UER00684"/>
</dbReference>
<dbReference type="Proteomes" id="UP000002084">
    <property type="component" value="Chromosome"/>
</dbReference>
<dbReference type="GO" id="GO:0005737">
    <property type="term" value="C:cytoplasm"/>
    <property type="evidence" value="ECO:0007669"/>
    <property type="project" value="TreeGrafter"/>
</dbReference>
<dbReference type="GO" id="GO:0004342">
    <property type="term" value="F:glucosamine-6-phosphate deaminase activity"/>
    <property type="evidence" value="ECO:0007669"/>
    <property type="project" value="UniProtKB-UniRule"/>
</dbReference>
<dbReference type="GO" id="GO:0042802">
    <property type="term" value="F:identical protein binding"/>
    <property type="evidence" value="ECO:0007669"/>
    <property type="project" value="TreeGrafter"/>
</dbReference>
<dbReference type="GO" id="GO:0005975">
    <property type="term" value="P:carbohydrate metabolic process"/>
    <property type="evidence" value="ECO:0007669"/>
    <property type="project" value="InterPro"/>
</dbReference>
<dbReference type="GO" id="GO:0006043">
    <property type="term" value="P:glucosamine catabolic process"/>
    <property type="evidence" value="ECO:0007669"/>
    <property type="project" value="TreeGrafter"/>
</dbReference>
<dbReference type="GO" id="GO:0006046">
    <property type="term" value="P:N-acetylglucosamine catabolic process"/>
    <property type="evidence" value="ECO:0007669"/>
    <property type="project" value="TreeGrafter"/>
</dbReference>
<dbReference type="GO" id="GO:0019262">
    <property type="term" value="P:N-acetylneuraminate catabolic process"/>
    <property type="evidence" value="ECO:0007669"/>
    <property type="project" value="UniProtKB-UniRule"/>
</dbReference>
<dbReference type="CDD" id="cd01399">
    <property type="entry name" value="GlcN6P_deaminase"/>
    <property type="match status" value="1"/>
</dbReference>
<dbReference type="FunFam" id="3.40.50.1360:FF:000002">
    <property type="entry name" value="Glucosamine-6-phosphate deaminase"/>
    <property type="match status" value="1"/>
</dbReference>
<dbReference type="Gene3D" id="3.40.50.1360">
    <property type="match status" value="1"/>
</dbReference>
<dbReference type="HAMAP" id="MF_01241">
    <property type="entry name" value="GlcN6P_deamin"/>
    <property type="match status" value="1"/>
</dbReference>
<dbReference type="InterPro" id="IPR006148">
    <property type="entry name" value="Glc/Gal-6P_isomerase"/>
</dbReference>
<dbReference type="InterPro" id="IPR004547">
    <property type="entry name" value="Glucosamine6P_isomerase"/>
</dbReference>
<dbReference type="InterPro" id="IPR018321">
    <property type="entry name" value="Glucosamine6P_isomerase_CS"/>
</dbReference>
<dbReference type="InterPro" id="IPR037171">
    <property type="entry name" value="NagB/RpiA_transferase-like"/>
</dbReference>
<dbReference type="NCBIfam" id="TIGR00502">
    <property type="entry name" value="nagB"/>
    <property type="match status" value="1"/>
</dbReference>
<dbReference type="NCBIfam" id="NF001685">
    <property type="entry name" value="PRK00443.1-5"/>
    <property type="match status" value="1"/>
</dbReference>
<dbReference type="PANTHER" id="PTHR11280">
    <property type="entry name" value="GLUCOSAMINE-6-PHOSPHATE ISOMERASE"/>
    <property type="match status" value="1"/>
</dbReference>
<dbReference type="PANTHER" id="PTHR11280:SF5">
    <property type="entry name" value="GLUCOSAMINE-6-PHOSPHATE ISOMERASE"/>
    <property type="match status" value="1"/>
</dbReference>
<dbReference type="Pfam" id="PF01182">
    <property type="entry name" value="Glucosamine_iso"/>
    <property type="match status" value="1"/>
</dbReference>
<dbReference type="SUPFAM" id="SSF100950">
    <property type="entry name" value="NagB/RpiA/CoA transferase-like"/>
    <property type="match status" value="1"/>
</dbReference>
<dbReference type="PROSITE" id="PS01161">
    <property type="entry name" value="GLC_GALNAC_ISOMERASE"/>
    <property type="match status" value="1"/>
</dbReference>
<gene>
    <name evidence="1" type="primary">nagB</name>
    <name type="ordered locus">SARI_02257</name>
</gene>
<name>NAGB_SALAR</name>
<evidence type="ECO:0000255" key="1">
    <source>
        <dbReference type="HAMAP-Rule" id="MF_01241"/>
    </source>
</evidence>
<proteinExistence type="inferred from homology"/>
<organism>
    <name type="scientific">Salmonella arizonae (strain ATCC BAA-731 / CDC346-86 / RSK2980)</name>
    <dbReference type="NCBI Taxonomy" id="41514"/>
    <lineage>
        <taxon>Bacteria</taxon>
        <taxon>Pseudomonadati</taxon>
        <taxon>Pseudomonadota</taxon>
        <taxon>Gammaproteobacteria</taxon>
        <taxon>Enterobacterales</taxon>
        <taxon>Enterobacteriaceae</taxon>
        <taxon>Salmonella</taxon>
    </lineage>
</organism>
<sequence>MRLIPLNTAEQVGKWAARHIVNRINAFKPTADRPFVLGLPTGGTPLTAYKALVEMHKAGEVSFKHVVTFNMDEYVGLPKEHPESYYSFMHRNFFDHVDIPAENINLLNGNAPDIDAECRQYEEKIRSYGKIHLFMGGVGNDGHIAFNEPASSLASRTRIKTLTHDTRVANSRFFDGDVNQVPKYALTVGVGTLLDAEEVMILVLGHQKAQALQAAVEGNVNHMWTISCLQLHPKAVVVCDEPATMELKVKTLKYFNELEAENIKGL</sequence>
<comment type="function">
    <text evidence="1">Catalyzes the reversible isomerization-deamination of glucosamine 6-phosphate (GlcN6P) to form fructose 6-phosphate (Fru6P) and ammonium ion.</text>
</comment>
<comment type="catalytic activity">
    <reaction evidence="1">
        <text>alpha-D-glucosamine 6-phosphate + H2O = beta-D-fructose 6-phosphate + NH4(+)</text>
        <dbReference type="Rhea" id="RHEA:12172"/>
        <dbReference type="ChEBI" id="CHEBI:15377"/>
        <dbReference type="ChEBI" id="CHEBI:28938"/>
        <dbReference type="ChEBI" id="CHEBI:57634"/>
        <dbReference type="ChEBI" id="CHEBI:75989"/>
        <dbReference type="EC" id="3.5.99.6"/>
    </reaction>
</comment>
<comment type="activity regulation">
    <text evidence="1">Allosterically activated by N-acetylglucosamine 6-phosphate (GlcNAc6P).</text>
</comment>
<comment type="pathway">
    <text evidence="1">Amino-sugar metabolism; N-acetylneuraminate degradation; D-fructose 6-phosphate from N-acetylneuraminate: step 5/5.</text>
</comment>
<comment type="subunit">
    <text evidence="1">Homohexamer.</text>
</comment>
<comment type="similarity">
    <text evidence="1">Belongs to the glucosamine/galactosamine-6-phosphate isomerase family. NagB subfamily.</text>
</comment>
<keyword id="KW-0021">Allosteric enzyme</keyword>
<keyword id="KW-0119">Carbohydrate metabolism</keyword>
<keyword id="KW-0378">Hydrolase</keyword>
<keyword id="KW-1185">Reference proteome</keyword>